<reference key="1">
    <citation type="journal article" date="2006" name="J. Bacteriol.">
        <title>Complete genome sequence of the dehalorespiring bacterium Desulfitobacterium hafniense Y51 and comparison with Dehalococcoides ethenogenes 195.</title>
        <authorList>
            <person name="Nonaka H."/>
            <person name="Keresztes G."/>
            <person name="Shinoda Y."/>
            <person name="Ikenaga Y."/>
            <person name="Abe M."/>
            <person name="Naito K."/>
            <person name="Inatomi K."/>
            <person name="Furukawa K."/>
            <person name="Inui M."/>
            <person name="Yukawa H."/>
        </authorList>
    </citation>
    <scope>NUCLEOTIDE SEQUENCE [LARGE SCALE GENOMIC DNA]</scope>
    <source>
        <strain>Y51</strain>
    </source>
</reference>
<evidence type="ECO:0000255" key="1">
    <source>
        <dbReference type="HAMAP-Rule" id="MF_01018"/>
    </source>
</evidence>
<keyword id="KW-0028">Amino-acid biosynthesis</keyword>
<keyword id="KW-0067">ATP-binding</keyword>
<keyword id="KW-0963">Cytoplasm</keyword>
<keyword id="KW-0328">Glycosyltransferase</keyword>
<keyword id="KW-0368">Histidine biosynthesis</keyword>
<keyword id="KW-0547">Nucleotide-binding</keyword>
<keyword id="KW-1185">Reference proteome</keyword>
<keyword id="KW-0808">Transferase</keyword>
<name>HIS1_DESHY</name>
<sequence length="223" mass="25019">MARNFLTIALPKGKLLTDSLEALTKIGIECQEVSEESRKLVFPLEKAQAQIIICRPTDIPTFVEYGAADIGFVGKDTLLEENKDVVELLDLGFGYCRFVVAMPEEKVPPRLPDGRFDLSGLNHQRVATKFPRVAEDFFREQGMQVLPIKLHGNIELAPRVGLAEMIVDIVSTGTTLRQNKLVEIAPILEATTRLIANRVAYRMKHERINELTEKLRQLLGKAP</sequence>
<gene>
    <name evidence="1" type="primary">hisG</name>
    <name type="ordered locus">DSY3914</name>
</gene>
<comment type="function">
    <text evidence="1">Catalyzes the condensation of ATP and 5-phosphoribose 1-diphosphate to form N'-(5'-phosphoribosyl)-ATP (PR-ATP). Has a crucial role in the pathway because the rate of histidine biosynthesis seems to be controlled primarily by regulation of HisG enzymatic activity.</text>
</comment>
<comment type="catalytic activity">
    <reaction evidence="1">
        <text>1-(5-phospho-beta-D-ribosyl)-ATP + diphosphate = 5-phospho-alpha-D-ribose 1-diphosphate + ATP</text>
        <dbReference type="Rhea" id="RHEA:18473"/>
        <dbReference type="ChEBI" id="CHEBI:30616"/>
        <dbReference type="ChEBI" id="CHEBI:33019"/>
        <dbReference type="ChEBI" id="CHEBI:58017"/>
        <dbReference type="ChEBI" id="CHEBI:73183"/>
        <dbReference type="EC" id="2.4.2.17"/>
    </reaction>
</comment>
<comment type="pathway">
    <text evidence="1">Amino-acid biosynthesis; L-histidine biosynthesis; L-histidine from 5-phospho-alpha-D-ribose 1-diphosphate: step 1/9.</text>
</comment>
<comment type="subunit">
    <text evidence="1">Heteromultimer composed of HisG and HisZ subunits.</text>
</comment>
<comment type="subcellular location">
    <subcellularLocation>
        <location evidence="1">Cytoplasm</location>
    </subcellularLocation>
</comment>
<comment type="domain">
    <text>Lacks the C-terminal regulatory region which is replaced by HisZ.</text>
</comment>
<comment type="similarity">
    <text evidence="1">Belongs to the ATP phosphoribosyltransferase family. Short subfamily.</text>
</comment>
<feature type="chain" id="PRO_1000063280" description="ATP phosphoribosyltransferase">
    <location>
        <begin position="1"/>
        <end position="223"/>
    </location>
</feature>
<accession>Q24QI9</accession>
<organism>
    <name type="scientific">Desulfitobacterium hafniense (strain Y51)</name>
    <dbReference type="NCBI Taxonomy" id="138119"/>
    <lineage>
        <taxon>Bacteria</taxon>
        <taxon>Bacillati</taxon>
        <taxon>Bacillota</taxon>
        <taxon>Clostridia</taxon>
        <taxon>Eubacteriales</taxon>
        <taxon>Desulfitobacteriaceae</taxon>
        <taxon>Desulfitobacterium</taxon>
    </lineage>
</organism>
<proteinExistence type="inferred from homology"/>
<protein>
    <recommendedName>
        <fullName evidence="1">ATP phosphoribosyltransferase</fullName>
        <shortName evidence="1">ATP-PRT</shortName>
        <shortName evidence="1">ATP-PRTase</shortName>
        <ecNumber evidence="1">2.4.2.17</ecNumber>
    </recommendedName>
</protein>
<dbReference type="EC" id="2.4.2.17" evidence="1"/>
<dbReference type="EMBL" id="AP008230">
    <property type="protein sequence ID" value="BAE85703.1"/>
    <property type="molecule type" value="Genomic_DNA"/>
</dbReference>
<dbReference type="RefSeq" id="WP_005817216.1">
    <property type="nucleotide sequence ID" value="NC_007907.1"/>
</dbReference>
<dbReference type="SMR" id="Q24QI9"/>
<dbReference type="STRING" id="138119.DSY3914"/>
<dbReference type="KEGG" id="dsy:DSY3914"/>
<dbReference type="eggNOG" id="COG0040">
    <property type="taxonomic scope" value="Bacteria"/>
</dbReference>
<dbReference type="HOGENOM" id="CLU_038115_2_0_9"/>
<dbReference type="UniPathway" id="UPA00031">
    <property type="reaction ID" value="UER00006"/>
</dbReference>
<dbReference type="Proteomes" id="UP000001946">
    <property type="component" value="Chromosome"/>
</dbReference>
<dbReference type="GO" id="GO:0005737">
    <property type="term" value="C:cytoplasm"/>
    <property type="evidence" value="ECO:0007669"/>
    <property type="project" value="UniProtKB-SubCell"/>
</dbReference>
<dbReference type="GO" id="GO:0005524">
    <property type="term" value="F:ATP binding"/>
    <property type="evidence" value="ECO:0007669"/>
    <property type="project" value="UniProtKB-KW"/>
</dbReference>
<dbReference type="GO" id="GO:0003879">
    <property type="term" value="F:ATP phosphoribosyltransferase activity"/>
    <property type="evidence" value="ECO:0007669"/>
    <property type="project" value="UniProtKB-UniRule"/>
</dbReference>
<dbReference type="GO" id="GO:0000105">
    <property type="term" value="P:L-histidine biosynthetic process"/>
    <property type="evidence" value="ECO:0007669"/>
    <property type="project" value="UniProtKB-UniRule"/>
</dbReference>
<dbReference type="CDD" id="cd13595">
    <property type="entry name" value="PBP2_HisGs"/>
    <property type="match status" value="1"/>
</dbReference>
<dbReference type="FunFam" id="3.40.190.10:FF:000008">
    <property type="entry name" value="ATP phosphoribosyltransferase"/>
    <property type="match status" value="1"/>
</dbReference>
<dbReference type="FunFam" id="3.40.190.10:FF:000011">
    <property type="entry name" value="ATP phosphoribosyltransferase"/>
    <property type="match status" value="1"/>
</dbReference>
<dbReference type="Gene3D" id="3.40.190.10">
    <property type="entry name" value="Periplasmic binding protein-like II"/>
    <property type="match status" value="2"/>
</dbReference>
<dbReference type="HAMAP" id="MF_01018">
    <property type="entry name" value="HisG_Short"/>
    <property type="match status" value="1"/>
</dbReference>
<dbReference type="InterPro" id="IPR013820">
    <property type="entry name" value="ATP_PRibTrfase_cat"/>
</dbReference>
<dbReference type="InterPro" id="IPR018198">
    <property type="entry name" value="ATP_PRibTrfase_CS"/>
</dbReference>
<dbReference type="InterPro" id="IPR001348">
    <property type="entry name" value="ATP_PRibTrfase_HisG"/>
</dbReference>
<dbReference type="InterPro" id="IPR024893">
    <property type="entry name" value="ATP_PRibTrfase_HisG_short"/>
</dbReference>
<dbReference type="NCBIfam" id="TIGR00070">
    <property type="entry name" value="hisG"/>
    <property type="match status" value="1"/>
</dbReference>
<dbReference type="PANTHER" id="PTHR21403:SF8">
    <property type="entry name" value="ATP PHOSPHORIBOSYLTRANSFERASE"/>
    <property type="match status" value="1"/>
</dbReference>
<dbReference type="PANTHER" id="PTHR21403">
    <property type="entry name" value="ATP PHOSPHORIBOSYLTRANSFERASE ATP-PRTASE"/>
    <property type="match status" value="1"/>
</dbReference>
<dbReference type="Pfam" id="PF01634">
    <property type="entry name" value="HisG"/>
    <property type="match status" value="1"/>
</dbReference>
<dbReference type="SUPFAM" id="SSF53850">
    <property type="entry name" value="Periplasmic binding protein-like II"/>
    <property type="match status" value="1"/>
</dbReference>
<dbReference type="PROSITE" id="PS01316">
    <property type="entry name" value="ATP_P_PHORIBOSYLTR"/>
    <property type="match status" value="1"/>
</dbReference>